<organism>
    <name type="scientific">Pseudomonas syringae pv. tomato (strain ATCC BAA-871 / DC3000)</name>
    <dbReference type="NCBI Taxonomy" id="223283"/>
    <lineage>
        <taxon>Bacteria</taxon>
        <taxon>Pseudomonadati</taxon>
        <taxon>Pseudomonadota</taxon>
        <taxon>Gammaproteobacteria</taxon>
        <taxon>Pseudomonadales</taxon>
        <taxon>Pseudomonadaceae</taxon>
        <taxon>Pseudomonas</taxon>
    </lineage>
</organism>
<comment type="function">
    <text evidence="1">Molecular chaperone. Has ATPase activity.</text>
</comment>
<comment type="subunit">
    <text evidence="1">Homodimer.</text>
</comment>
<comment type="subcellular location">
    <subcellularLocation>
        <location evidence="1">Cytoplasm</location>
    </subcellularLocation>
</comment>
<comment type="similarity">
    <text evidence="1">Belongs to the heat shock protein 90 family.</text>
</comment>
<dbReference type="EMBL" id="AE016853">
    <property type="protein sequence ID" value="AAO55724.1"/>
    <property type="molecule type" value="Genomic_DNA"/>
</dbReference>
<dbReference type="RefSeq" id="NP_792029.1">
    <property type="nucleotide sequence ID" value="NC_004578.1"/>
</dbReference>
<dbReference type="RefSeq" id="WP_005769616.1">
    <property type="nucleotide sequence ID" value="NC_004578.1"/>
</dbReference>
<dbReference type="SMR" id="Q883Y9"/>
<dbReference type="STRING" id="223283.PSPTO_2208"/>
<dbReference type="GeneID" id="1183859"/>
<dbReference type="KEGG" id="pst:PSPTO_2208"/>
<dbReference type="PATRIC" id="fig|223283.9.peg.2240"/>
<dbReference type="eggNOG" id="COG0326">
    <property type="taxonomic scope" value="Bacteria"/>
</dbReference>
<dbReference type="HOGENOM" id="CLU_006684_3_0_6"/>
<dbReference type="OrthoDB" id="9802640at2"/>
<dbReference type="PhylomeDB" id="Q883Y9"/>
<dbReference type="Proteomes" id="UP000002515">
    <property type="component" value="Chromosome"/>
</dbReference>
<dbReference type="GO" id="GO:0005737">
    <property type="term" value="C:cytoplasm"/>
    <property type="evidence" value="ECO:0007669"/>
    <property type="project" value="UniProtKB-SubCell"/>
</dbReference>
<dbReference type="GO" id="GO:0005524">
    <property type="term" value="F:ATP binding"/>
    <property type="evidence" value="ECO:0007669"/>
    <property type="project" value="UniProtKB-UniRule"/>
</dbReference>
<dbReference type="GO" id="GO:0016887">
    <property type="term" value="F:ATP hydrolysis activity"/>
    <property type="evidence" value="ECO:0007669"/>
    <property type="project" value="InterPro"/>
</dbReference>
<dbReference type="GO" id="GO:0140662">
    <property type="term" value="F:ATP-dependent protein folding chaperone"/>
    <property type="evidence" value="ECO:0007669"/>
    <property type="project" value="InterPro"/>
</dbReference>
<dbReference type="GO" id="GO:0051082">
    <property type="term" value="F:unfolded protein binding"/>
    <property type="evidence" value="ECO:0007669"/>
    <property type="project" value="UniProtKB-UniRule"/>
</dbReference>
<dbReference type="CDD" id="cd16927">
    <property type="entry name" value="HATPase_Hsp90-like"/>
    <property type="match status" value="1"/>
</dbReference>
<dbReference type="FunFam" id="3.30.230.80:FF:000002">
    <property type="entry name" value="Molecular chaperone HtpG"/>
    <property type="match status" value="1"/>
</dbReference>
<dbReference type="FunFam" id="3.30.565.10:FF:000009">
    <property type="entry name" value="Molecular chaperone HtpG"/>
    <property type="match status" value="1"/>
</dbReference>
<dbReference type="Gene3D" id="3.30.230.80">
    <property type="match status" value="1"/>
</dbReference>
<dbReference type="Gene3D" id="3.40.50.11260">
    <property type="match status" value="1"/>
</dbReference>
<dbReference type="Gene3D" id="1.20.120.790">
    <property type="entry name" value="Heat shock protein 90, C-terminal domain"/>
    <property type="match status" value="1"/>
</dbReference>
<dbReference type="Gene3D" id="3.30.565.10">
    <property type="entry name" value="Histidine kinase-like ATPase, C-terminal domain"/>
    <property type="match status" value="1"/>
</dbReference>
<dbReference type="HAMAP" id="MF_00505">
    <property type="entry name" value="HSP90"/>
    <property type="match status" value="1"/>
</dbReference>
<dbReference type="InterPro" id="IPR036890">
    <property type="entry name" value="HATPase_C_sf"/>
</dbReference>
<dbReference type="InterPro" id="IPR019805">
    <property type="entry name" value="Heat_shock_protein_90_CS"/>
</dbReference>
<dbReference type="InterPro" id="IPR037196">
    <property type="entry name" value="HSP90_C"/>
</dbReference>
<dbReference type="InterPro" id="IPR001404">
    <property type="entry name" value="Hsp90_fam"/>
</dbReference>
<dbReference type="InterPro" id="IPR020575">
    <property type="entry name" value="Hsp90_N"/>
</dbReference>
<dbReference type="InterPro" id="IPR020568">
    <property type="entry name" value="Ribosomal_Su5_D2-typ_SF"/>
</dbReference>
<dbReference type="NCBIfam" id="NF003555">
    <property type="entry name" value="PRK05218.1"/>
    <property type="match status" value="1"/>
</dbReference>
<dbReference type="PANTHER" id="PTHR11528">
    <property type="entry name" value="HEAT SHOCK PROTEIN 90 FAMILY MEMBER"/>
    <property type="match status" value="1"/>
</dbReference>
<dbReference type="Pfam" id="PF13589">
    <property type="entry name" value="HATPase_c_3"/>
    <property type="match status" value="1"/>
</dbReference>
<dbReference type="Pfam" id="PF00183">
    <property type="entry name" value="HSP90"/>
    <property type="match status" value="1"/>
</dbReference>
<dbReference type="PIRSF" id="PIRSF002583">
    <property type="entry name" value="Hsp90"/>
    <property type="match status" value="1"/>
</dbReference>
<dbReference type="PRINTS" id="PR00775">
    <property type="entry name" value="HEATSHOCK90"/>
</dbReference>
<dbReference type="SMART" id="SM00387">
    <property type="entry name" value="HATPase_c"/>
    <property type="match status" value="1"/>
</dbReference>
<dbReference type="SUPFAM" id="SSF55874">
    <property type="entry name" value="ATPase domain of HSP90 chaperone/DNA topoisomerase II/histidine kinase"/>
    <property type="match status" value="1"/>
</dbReference>
<dbReference type="SUPFAM" id="SSF110942">
    <property type="entry name" value="HSP90 C-terminal domain"/>
    <property type="match status" value="1"/>
</dbReference>
<dbReference type="SUPFAM" id="SSF54211">
    <property type="entry name" value="Ribosomal protein S5 domain 2-like"/>
    <property type="match status" value="1"/>
</dbReference>
<dbReference type="PROSITE" id="PS00298">
    <property type="entry name" value="HSP90"/>
    <property type="match status" value="1"/>
</dbReference>
<accession>Q883Y9</accession>
<keyword id="KW-0067">ATP-binding</keyword>
<keyword id="KW-0143">Chaperone</keyword>
<keyword id="KW-0963">Cytoplasm</keyword>
<keyword id="KW-0547">Nucleotide-binding</keyword>
<keyword id="KW-1185">Reference proteome</keyword>
<keyword id="KW-0346">Stress response</keyword>
<evidence type="ECO:0000255" key="1">
    <source>
        <dbReference type="HAMAP-Rule" id="MF_00505"/>
    </source>
</evidence>
<feature type="chain" id="PRO_0000063005" description="Chaperone protein HtpG">
    <location>
        <begin position="1"/>
        <end position="635"/>
    </location>
</feature>
<feature type="region of interest" description="A; substrate-binding" evidence="1">
    <location>
        <begin position="1"/>
        <end position="343"/>
    </location>
</feature>
<feature type="region of interest" description="B" evidence="1">
    <location>
        <begin position="344"/>
        <end position="560"/>
    </location>
</feature>
<feature type="region of interest" description="C" evidence="1">
    <location>
        <begin position="561"/>
        <end position="635"/>
    </location>
</feature>
<reference key="1">
    <citation type="journal article" date="2003" name="Proc. Natl. Acad. Sci. U.S.A.">
        <title>The complete genome sequence of the Arabidopsis and tomato pathogen Pseudomonas syringae pv. tomato DC3000.</title>
        <authorList>
            <person name="Buell C.R."/>
            <person name="Joardar V."/>
            <person name="Lindeberg M."/>
            <person name="Selengut J."/>
            <person name="Paulsen I.T."/>
            <person name="Gwinn M.L."/>
            <person name="Dodson R.J."/>
            <person name="DeBoy R.T."/>
            <person name="Durkin A.S."/>
            <person name="Kolonay J.F."/>
            <person name="Madupu R."/>
            <person name="Daugherty S.C."/>
            <person name="Brinkac L.M."/>
            <person name="Beanan M.J."/>
            <person name="Haft D.H."/>
            <person name="Nelson W.C."/>
            <person name="Davidsen T.M."/>
            <person name="Zafar N."/>
            <person name="Zhou L."/>
            <person name="Liu J."/>
            <person name="Yuan Q."/>
            <person name="Khouri H.M."/>
            <person name="Fedorova N.B."/>
            <person name="Tran B."/>
            <person name="Russell D."/>
            <person name="Berry K.J."/>
            <person name="Utterback T.R."/>
            <person name="Van Aken S.E."/>
            <person name="Feldblyum T.V."/>
            <person name="D'Ascenzo M."/>
            <person name="Deng W.-L."/>
            <person name="Ramos A.R."/>
            <person name="Alfano J.R."/>
            <person name="Cartinhour S."/>
            <person name="Chatterjee A.K."/>
            <person name="Delaney T.P."/>
            <person name="Lazarowitz S.G."/>
            <person name="Martin G.B."/>
            <person name="Schneider D.J."/>
            <person name="Tang X."/>
            <person name="Bender C.L."/>
            <person name="White O."/>
            <person name="Fraser C.M."/>
            <person name="Collmer A."/>
        </authorList>
    </citation>
    <scope>NUCLEOTIDE SEQUENCE [LARGE SCALE GENOMIC DNA]</scope>
    <source>
        <strain>ATCC BAA-871 / DC3000</strain>
    </source>
</reference>
<protein>
    <recommendedName>
        <fullName evidence="1">Chaperone protein HtpG</fullName>
    </recommendedName>
    <alternativeName>
        <fullName evidence="1">Heat shock protein HtpG</fullName>
    </alternativeName>
    <alternativeName>
        <fullName evidence="1">High temperature protein G</fullName>
    </alternativeName>
</protein>
<proteinExistence type="inferred from homology"/>
<gene>
    <name evidence="1" type="primary">htpG</name>
    <name type="ordered locus">PSPTO_2208</name>
</gene>
<name>HTPG_PSESM</name>
<sequence>MSVETQKETLGFQTEVKQLLHLMIHSLYSNKEIFLRELISNASDAVDKLRFEALSRPELLEGGAELKIRVSFDKDAKTVTLEDNGIGMSREDVITHLGTIAKSGTADFMKNLSGDQKKDSHLIGQFGVGFYSAFIVADQVEVFSRRAGSPSSEGVHWSSKGEGEFEVANVDKAERGTRIVLHLKNGEEEFADGYRLRNIIKKYSDHIALPIELPKEQAPAAEGEEAPAQEWETVNRASALWTRPRTEVKDEEYQEFYKHVAHDYENPLSWSHNKVEGKLEYTSLLYVPARAPFDLYQREAPRGLKLYVQRVFVMDQAESFLPLYMRFVKGVVDSNDLSLNVSREILQKDPIIDSMKSALTKRVLDMLEKLAKNEPEQYKGFWKNFGQVLKEGPAEDFANKEKIAGLLRFASTSDDSGEQSVSLADYLARGKEGQDKIYYLTGESYAQVRNSPHLEVFRKKGIEVLLLTDRIDEWLMSYLSDFDGKNFVDVARGDLDLGNLDSEEDKKAQEEIAKDKEGLIERLKAALGESVSEVRVSHRLTDSPAILAIGEQDMGLQMRQILEASGQKVPDSKPIFEFNPAHPLIGKLDAEQSEERFGDLSHILFDQAALAAGDSLKDPAAYVRRLNKLLVELSV</sequence>